<proteinExistence type="evidence at protein level"/>
<accession>Q4WFQ4</accession>
<keyword id="KW-0067">ATP-binding</keyword>
<keyword id="KW-1003">Cell membrane</keyword>
<keyword id="KW-0325">Glycoprotein</keyword>
<keyword id="KW-0378">Hydrolase</keyword>
<keyword id="KW-0472">Membrane</keyword>
<keyword id="KW-0547">Nucleotide-binding</keyword>
<keyword id="KW-1185">Reference proteome</keyword>
<keyword id="KW-0677">Repeat</keyword>
<keyword id="KW-0812">Transmembrane</keyword>
<keyword id="KW-1133">Transmembrane helix</keyword>
<keyword id="KW-0813">Transport</keyword>
<feature type="chain" id="PRO_0000452661" description="ABC multidrug transporter H">
    <location>
        <begin position="1"/>
        <end position="1424"/>
    </location>
</feature>
<feature type="transmembrane region" description="Helical" evidence="1">
    <location>
        <begin position="488"/>
        <end position="508"/>
    </location>
</feature>
<feature type="transmembrane region" description="Helical" evidence="1">
    <location>
        <begin position="520"/>
        <end position="540"/>
    </location>
</feature>
<feature type="transmembrane region" description="Helical" evidence="1">
    <location>
        <begin position="544"/>
        <end position="564"/>
    </location>
</feature>
<feature type="transmembrane region" description="Helical" evidence="1">
    <location>
        <begin position="569"/>
        <end position="589"/>
    </location>
</feature>
<feature type="transmembrane region" description="Helical" evidence="1">
    <location>
        <begin position="605"/>
        <end position="625"/>
    </location>
</feature>
<feature type="transmembrane region" description="Helical" evidence="1">
    <location>
        <begin position="629"/>
        <end position="649"/>
    </location>
</feature>
<feature type="transmembrane region" description="Helical" evidence="1">
    <location>
        <begin position="710"/>
        <end position="730"/>
    </location>
</feature>
<feature type="transmembrane region" description="Helical" evidence="1">
    <location>
        <begin position="1131"/>
        <end position="1151"/>
    </location>
</feature>
<feature type="transmembrane region" description="Helical" evidence="1">
    <location>
        <begin position="1161"/>
        <end position="1181"/>
    </location>
</feature>
<feature type="transmembrane region" description="Helical" evidence="1">
    <location>
        <begin position="1200"/>
        <end position="1220"/>
    </location>
</feature>
<feature type="transmembrane region" description="Helical" evidence="1">
    <location>
        <begin position="1240"/>
        <end position="1260"/>
    </location>
</feature>
<feature type="transmembrane region" description="Helical" evidence="1">
    <location>
        <begin position="1268"/>
        <end position="1288"/>
    </location>
</feature>
<feature type="transmembrane region" description="Helical" evidence="1">
    <location>
        <begin position="1300"/>
        <end position="1320"/>
    </location>
</feature>
<feature type="transmembrane region" description="Helical" evidence="1">
    <location>
        <begin position="1395"/>
        <end position="1415"/>
    </location>
</feature>
<feature type="domain" description="ABC transporter 1" evidence="2">
    <location>
        <begin position="96"/>
        <end position="351"/>
    </location>
</feature>
<feature type="domain" description="ABC transporter 2" evidence="2">
    <location>
        <begin position="794"/>
        <end position="1037"/>
    </location>
</feature>
<feature type="region of interest" description="Disordered" evidence="4">
    <location>
        <begin position="1"/>
        <end position="49"/>
    </location>
</feature>
<feature type="region of interest" description="Disordered" evidence="4">
    <location>
        <begin position="760"/>
        <end position="782"/>
    </location>
</feature>
<feature type="compositionally biased region" description="Polar residues" evidence="4">
    <location>
        <begin position="23"/>
        <end position="42"/>
    </location>
</feature>
<feature type="binding site" evidence="2">
    <location>
        <begin position="830"/>
        <end position="837"/>
    </location>
    <ligand>
        <name>ATP</name>
        <dbReference type="ChEBI" id="CHEBI:30616"/>
    </ligand>
</feature>
<feature type="glycosylation site" description="N-linked (GlcNAc...) asparagine" evidence="3">
    <location>
        <position position="79"/>
    </location>
</feature>
<feature type="glycosylation site" description="N-linked (GlcNAc...) asparagine" evidence="3">
    <location>
        <position position="275"/>
    </location>
</feature>
<feature type="glycosylation site" description="N-linked (GlcNAc...) asparagine" evidence="3">
    <location>
        <position position="790"/>
    </location>
</feature>
<feature type="glycosylation site" description="N-linked (GlcNAc...) asparagine" evidence="3">
    <location>
        <position position="798"/>
    </location>
</feature>
<feature type="glycosylation site" description="N-linked (GlcNAc...) asparagine" evidence="3">
    <location>
        <position position="1265"/>
    </location>
</feature>
<feature type="glycosylation site" description="N-linked (GlcNAc...) asparagine" evidence="3">
    <location>
        <position position="1338"/>
    </location>
</feature>
<reference key="1">
    <citation type="journal article" date="2005" name="Nature">
        <title>Genomic sequence of the pathogenic and allergenic filamentous fungus Aspergillus fumigatus.</title>
        <authorList>
            <person name="Nierman W.C."/>
            <person name="Pain A."/>
            <person name="Anderson M.J."/>
            <person name="Wortman J.R."/>
            <person name="Kim H.S."/>
            <person name="Arroyo J."/>
            <person name="Berriman M."/>
            <person name="Abe K."/>
            <person name="Archer D.B."/>
            <person name="Bermejo C."/>
            <person name="Bennett J.W."/>
            <person name="Bowyer P."/>
            <person name="Chen D."/>
            <person name="Collins M."/>
            <person name="Coulsen R."/>
            <person name="Davies R."/>
            <person name="Dyer P.S."/>
            <person name="Farman M.L."/>
            <person name="Fedorova N."/>
            <person name="Fedorova N.D."/>
            <person name="Feldblyum T.V."/>
            <person name="Fischer R."/>
            <person name="Fosker N."/>
            <person name="Fraser A."/>
            <person name="Garcia J.L."/>
            <person name="Garcia M.J."/>
            <person name="Goble A."/>
            <person name="Goldman G.H."/>
            <person name="Gomi K."/>
            <person name="Griffith-Jones S."/>
            <person name="Gwilliam R."/>
            <person name="Haas B.J."/>
            <person name="Haas H."/>
            <person name="Harris D.E."/>
            <person name="Horiuchi H."/>
            <person name="Huang J."/>
            <person name="Humphray S."/>
            <person name="Jimenez J."/>
            <person name="Keller N."/>
            <person name="Khouri H."/>
            <person name="Kitamoto K."/>
            <person name="Kobayashi T."/>
            <person name="Konzack S."/>
            <person name="Kulkarni R."/>
            <person name="Kumagai T."/>
            <person name="Lafton A."/>
            <person name="Latge J.-P."/>
            <person name="Li W."/>
            <person name="Lord A."/>
            <person name="Lu C."/>
            <person name="Majoros W.H."/>
            <person name="May G.S."/>
            <person name="Miller B.L."/>
            <person name="Mohamoud Y."/>
            <person name="Molina M."/>
            <person name="Monod M."/>
            <person name="Mouyna I."/>
            <person name="Mulligan S."/>
            <person name="Murphy L.D."/>
            <person name="O'Neil S."/>
            <person name="Paulsen I."/>
            <person name="Penalva M.A."/>
            <person name="Pertea M."/>
            <person name="Price C."/>
            <person name="Pritchard B.L."/>
            <person name="Quail M.A."/>
            <person name="Rabbinowitsch E."/>
            <person name="Rawlins N."/>
            <person name="Rajandream M.A."/>
            <person name="Reichard U."/>
            <person name="Renauld H."/>
            <person name="Robson G.D."/>
            <person name="Rodriguez de Cordoba S."/>
            <person name="Rodriguez-Pena J.M."/>
            <person name="Ronning C.M."/>
            <person name="Rutter S."/>
            <person name="Salzberg S.L."/>
            <person name="Sanchez M."/>
            <person name="Sanchez-Ferrero J.C."/>
            <person name="Saunders D."/>
            <person name="Seeger K."/>
            <person name="Squares R."/>
            <person name="Squares S."/>
            <person name="Takeuchi M."/>
            <person name="Tekaia F."/>
            <person name="Turner G."/>
            <person name="Vazquez de Aldana C.R."/>
            <person name="Weidman J."/>
            <person name="White O."/>
            <person name="Woodward J.R."/>
            <person name="Yu J.-H."/>
            <person name="Fraser C.M."/>
            <person name="Galagan J.E."/>
            <person name="Asai K."/>
            <person name="Machida M."/>
            <person name="Hall N."/>
            <person name="Barrell B.G."/>
            <person name="Denning D.W."/>
        </authorList>
    </citation>
    <scope>NUCLEOTIDE SEQUENCE [LARGE SCALE GENOMIC DNA]</scope>
    <source>
        <strain>ATCC MYA-4609 / CBS 101355 / FGSC A1100 / Af293</strain>
    </source>
</reference>
<reference key="2">
    <citation type="journal article" date="2020" name="MBio">
        <title>Characterization of the efflux capability and substrate specificity of Aspergillus fumigatus PDR5-like ABC transporters expressed in Saccharomyces cerevisiae.</title>
        <authorList>
            <person name="Esquivel B.D."/>
            <person name="Rybak J.M."/>
            <person name="Barker K.S."/>
            <person name="Fortwendel J.R."/>
            <person name="Rogers P.D."/>
            <person name="White T.C."/>
        </authorList>
    </citation>
    <scope>FUNCTION</scope>
    <scope>CATALYTIC ACTIVITY</scope>
    <scope>SUBSTRATE SPECIFICITY</scope>
    <scope>ACTIVITY REGULATION</scope>
    <scope>INDUCTION</scope>
</reference>
<sequence>MEDQGHLPSEPRALFDRRDDTDSTNTALDETDLSRTPLQDTSHTPHAEDWSLMPDLKKQHDRNVASGFRRRELGVTWKNLSVDVVSADAAINENVLSQFNIPQHIRESRNKAPLRTILHESHGCVKPGEMLLVLGRPGSGCTTLLRMLSNHRLGYKAIRGDVRFGSLTPEEASKYRGQIVMNTEEELFFPTLTVAQTLDFATRLKVPFNLPDGVTSPEAFRQETREFLLKSMGISHTSDTKVGNEYVRGVSGGERKRVSIIECLATRGSVFCWDNSTRGLDASTALEWAKAVRAMTDVFGLSSIVTLYQAGNGIYDLFDKVLVLDEGKQIYYGPMSQARPFMEEQGFVCREGSNVADFLTGVTVPTERKIRPGYENRFPRNADELLAAYEKSPIRAQMAIEYDYPDTESTRERTEEFKLGVLDEKAKRLSKNSPFTVDFLQQVKACIIRQYQIIWTDKATFAIKQISTVIQALVAGSLFYNAPDNSGGLFIKSGALFFSLLYNSLLAMSEVTDSFSGRPVLIKHKYFAFFHPAAFCIAQIAADIPVLLFQISMFAVVVYFMVGLTTSAGAFFSYWIIIFVATMVMTALFRAIGALFSTFDGASKVSGFLISALIMYCGYLEPYHAMHPWFIWIYWINPLAYAFDALLSIEFHNKIIPCVGNNLVPFGPGYDDTTFQSCAGVGGAVRGMTYVTGDQYLASLTYSYSHVWRNFGILWAWWALFVAVTIIATSRWKSAAEAGNSLLIPRETVAKHHAVVRKDEEAQLNEKAGHKGTGTDSEAQSNVDQHLVRNTSVFTWKNLTYTVKTPSGDRVLLDNVYGWVKPGMLGALMGSSGAGKTTLLDVLAQRKTDGTIRGSIMVDGRPLPVSFQRSAGYCEQLDVHEPFATVREALEFSALLRQPRHIPREEKLKYVDVIIDLLELHDLEHTLIGRVGAGLSVEQRKRVTIGVELVSKPSILIFLDEPTSGLDGQSAFNTVRFLRKLADVGQAVLVTIHQPSAQLFAEFDTLLLLAKGGKMVYFGDIGDNAQTVKDYFARYGAPCPANVNPAEHMIDVVSGHLSQGRDWNQVWLESPEHSSASRELDSIISEAASKPPGTVDDGYEFAMPLWEQTKIVTQRMSTSLYRNCDYIMNKIALHIGSALFNGFSFWMIGDSVADMQLKLFTIFNFIFVAPGVINQLQPLFIERRDIYDAREKKSKMYSWVAFVTALIVSEFPYLCVCAVLYFVCWYYTVGFPSDSDKAGAIFFIMLCYEFLYTGIGQFIAAYAPNATFAALTNPLILGTLVSFCGVLVPYAQIQAFWRYWIYWLNPFNYLMGSMLVFSVFDTDVKCKEGEFAVFDTPNGTTCADYLSTYLQGVGSRANLVNPEATSGCRVCQYRYGSDYLYTINLKDYYYGWRDTAIVCIFVLSSYALVYALMKLRTKASKKAE</sequence>
<protein>
    <recommendedName>
        <fullName evidence="6">ABC multidrug transporter H</fullName>
    </recommendedName>
</protein>
<comment type="function">
    <text evidence="5">ABC efflux transporter that is able to transport rhodamine 6G (R-6G), a known substrate for many ABC transporters, but seems not to transport azoles.</text>
</comment>
<comment type="activity regulation">
    <text evidence="5">The efflux inhibitor FK506 impairs the transport activity.</text>
</comment>
<comment type="subcellular location">
    <subcellularLocation>
        <location evidence="8">Cell membrane</location>
        <topology evidence="1">Multi-pass membrane protein</topology>
    </subcellularLocation>
</comment>
<comment type="induction">
    <text evidence="5">Expression is induced in triazole-resistant isolates.</text>
</comment>
<comment type="similarity">
    <text evidence="7">Belongs to the ABC transporter superfamily. ABCG family. PDR (TC 3.A.1.205) subfamily.</text>
</comment>
<organism>
    <name type="scientific">Aspergillus fumigatus (strain ATCC MYA-4609 / CBS 101355 / FGSC A1100 / Af293)</name>
    <name type="common">Neosartorya fumigata</name>
    <dbReference type="NCBI Taxonomy" id="330879"/>
    <lineage>
        <taxon>Eukaryota</taxon>
        <taxon>Fungi</taxon>
        <taxon>Dikarya</taxon>
        <taxon>Ascomycota</taxon>
        <taxon>Pezizomycotina</taxon>
        <taxon>Eurotiomycetes</taxon>
        <taxon>Eurotiomycetidae</taxon>
        <taxon>Eurotiales</taxon>
        <taxon>Aspergillaceae</taxon>
        <taxon>Aspergillus</taxon>
        <taxon>Aspergillus subgen. Fumigati</taxon>
    </lineage>
</organism>
<dbReference type="EMBL" id="AAHF01000010">
    <property type="protein sequence ID" value="EAL86423.2"/>
    <property type="molecule type" value="Genomic_DNA"/>
</dbReference>
<dbReference type="RefSeq" id="XP_748461.2">
    <property type="nucleotide sequence ID" value="XM_743368.2"/>
</dbReference>
<dbReference type="SMR" id="Q4WFQ4"/>
<dbReference type="GlyCosmos" id="Q4WFQ4">
    <property type="glycosylation" value="6 sites, No reported glycans"/>
</dbReference>
<dbReference type="EnsemblFungi" id="EAL86423">
    <property type="protein sequence ID" value="EAL86423"/>
    <property type="gene ID" value="AFUA_3G01400"/>
</dbReference>
<dbReference type="GeneID" id="3506093"/>
<dbReference type="KEGG" id="afm:AFUA_3G01400"/>
<dbReference type="VEuPathDB" id="FungiDB:Afu3g01400"/>
<dbReference type="eggNOG" id="KOG0065">
    <property type="taxonomic scope" value="Eukaryota"/>
</dbReference>
<dbReference type="HOGENOM" id="CLU_000604_35_0_1"/>
<dbReference type="InParanoid" id="Q4WFQ4"/>
<dbReference type="OMA" id="RMNLINP"/>
<dbReference type="OrthoDB" id="245989at2759"/>
<dbReference type="Proteomes" id="UP000002530">
    <property type="component" value="Chromosome 3"/>
</dbReference>
<dbReference type="GO" id="GO:0005886">
    <property type="term" value="C:plasma membrane"/>
    <property type="evidence" value="ECO:0007669"/>
    <property type="project" value="UniProtKB-SubCell"/>
</dbReference>
<dbReference type="GO" id="GO:0140359">
    <property type="term" value="F:ABC-type transporter activity"/>
    <property type="evidence" value="ECO:0007669"/>
    <property type="project" value="InterPro"/>
</dbReference>
<dbReference type="GO" id="GO:0005524">
    <property type="term" value="F:ATP binding"/>
    <property type="evidence" value="ECO:0007669"/>
    <property type="project" value="UniProtKB-KW"/>
</dbReference>
<dbReference type="GO" id="GO:0016887">
    <property type="term" value="F:ATP hydrolysis activity"/>
    <property type="evidence" value="ECO:0007669"/>
    <property type="project" value="InterPro"/>
</dbReference>
<dbReference type="CDD" id="cd03233">
    <property type="entry name" value="ABCG_PDR_domain1"/>
    <property type="match status" value="1"/>
</dbReference>
<dbReference type="CDD" id="cd03232">
    <property type="entry name" value="ABCG_PDR_domain2"/>
    <property type="match status" value="1"/>
</dbReference>
<dbReference type="FunFam" id="3.40.50.300:FF:001465">
    <property type="entry name" value="ABC multidrug transporter (Eurofung)"/>
    <property type="match status" value="1"/>
</dbReference>
<dbReference type="FunFam" id="3.40.50.300:FF:000054">
    <property type="entry name" value="ABC multidrug transporter atrF"/>
    <property type="match status" value="1"/>
</dbReference>
<dbReference type="Gene3D" id="3.40.50.300">
    <property type="entry name" value="P-loop containing nucleotide triphosphate hydrolases"/>
    <property type="match status" value="2"/>
</dbReference>
<dbReference type="InterPro" id="IPR003593">
    <property type="entry name" value="AAA+_ATPase"/>
</dbReference>
<dbReference type="InterPro" id="IPR013525">
    <property type="entry name" value="ABC2_TM"/>
</dbReference>
<dbReference type="InterPro" id="IPR029481">
    <property type="entry name" value="ABC_trans_N"/>
</dbReference>
<dbReference type="InterPro" id="IPR003439">
    <property type="entry name" value="ABC_transporter-like_ATP-bd"/>
</dbReference>
<dbReference type="InterPro" id="IPR017871">
    <property type="entry name" value="ABC_transporter-like_CS"/>
</dbReference>
<dbReference type="InterPro" id="IPR043926">
    <property type="entry name" value="ABCG_dom"/>
</dbReference>
<dbReference type="InterPro" id="IPR034001">
    <property type="entry name" value="ABCG_PDR_1"/>
</dbReference>
<dbReference type="InterPro" id="IPR034003">
    <property type="entry name" value="ABCG_PDR_2"/>
</dbReference>
<dbReference type="InterPro" id="IPR027417">
    <property type="entry name" value="P-loop_NTPase"/>
</dbReference>
<dbReference type="InterPro" id="IPR010929">
    <property type="entry name" value="PDR_CDR_ABC"/>
</dbReference>
<dbReference type="PANTHER" id="PTHR19241">
    <property type="entry name" value="ATP-BINDING CASSETTE TRANSPORTER"/>
    <property type="match status" value="1"/>
</dbReference>
<dbReference type="Pfam" id="PF01061">
    <property type="entry name" value="ABC2_membrane"/>
    <property type="match status" value="2"/>
</dbReference>
<dbReference type="Pfam" id="PF19055">
    <property type="entry name" value="ABC2_membrane_7"/>
    <property type="match status" value="1"/>
</dbReference>
<dbReference type="Pfam" id="PF00005">
    <property type="entry name" value="ABC_tran"/>
    <property type="match status" value="2"/>
</dbReference>
<dbReference type="Pfam" id="PF14510">
    <property type="entry name" value="ABC_trans_N"/>
    <property type="match status" value="1"/>
</dbReference>
<dbReference type="Pfam" id="PF06422">
    <property type="entry name" value="PDR_CDR"/>
    <property type="match status" value="1"/>
</dbReference>
<dbReference type="SMART" id="SM00382">
    <property type="entry name" value="AAA"/>
    <property type="match status" value="2"/>
</dbReference>
<dbReference type="SUPFAM" id="SSF52540">
    <property type="entry name" value="P-loop containing nucleoside triphosphate hydrolases"/>
    <property type="match status" value="2"/>
</dbReference>
<dbReference type="PROSITE" id="PS00211">
    <property type="entry name" value="ABC_TRANSPORTER_1"/>
    <property type="match status" value="1"/>
</dbReference>
<dbReference type="PROSITE" id="PS50893">
    <property type="entry name" value="ABC_TRANSPORTER_2"/>
    <property type="match status" value="2"/>
</dbReference>
<gene>
    <name evidence="6" type="primary">abcH</name>
    <name type="ORF">AFUA_3G01400</name>
</gene>
<evidence type="ECO:0000255" key="1"/>
<evidence type="ECO:0000255" key="2">
    <source>
        <dbReference type="PROSITE-ProRule" id="PRU00434"/>
    </source>
</evidence>
<evidence type="ECO:0000255" key="3">
    <source>
        <dbReference type="PROSITE-ProRule" id="PRU00498"/>
    </source>
</evidence>
<evidence type="ECO:0000256" key="4">
    <source>
        <dbReference type="SAM" id="MobiDB-lite"/>
    </source>
</evidence>
<evidence type="ECO:0000269" key="5">
    <source>
    </source>
</evidence>
<evidence type="ECO:0000303" key="6">
    <source>
    </source>
</evidence>
<evidence type="ECO:0000305" key="7"/>
<evidence type="ECO:0000305" key="8">
    <source>
    </source>
</evidence>
<name>ABCH_ASPFU</name>